<feature type="signal peptide" evidence="2">
    <location>
        <begin position="1"/>
        <end position="22"/>
    </location>
</feature>
<feature type="chain" id="PRO_0000007887" description="Glucan 1,3-beta-glucosidase 1">
    <location>
        <begin position="23"/>
        <end position="407"/>
    </location>
</feature>
<feature type="active site" description="Proton donor" evidence="1">
    <location>
        <position position="213"/>
    </location>
</feature>
<feature type="active site" description="Nucleophile" evidence="1">
    <location>
        <position position="312"/>
    </location>
</feature>
<feature type="disulfide bond" evidence="1">
    <location>
        <begin position="295"/>
        <end position="406"/>
    </location>
</feature>
<feature type="sequence conflict" description="In Ref. 2; BAA13789." evidence="3" ref="2">
    <original>Q</original>
    <variation>E</variation>
    <location>
        <position position="178"/>
    </location>
</feature>
<proteinExistence type="evidence at transcript level"/>
<name>EXG1_SCHPO</name>
<comment type="function">
    <text evidence="1">Beta-glucanases participate in the metabolism of beta-glucan, the main structural component of the cell wall. It could also function biosynthetically as a transglycosylase (By similarity).</text>
</comment>
<comment type="catalytic activity">
    <reaction>
        <text>Successive hydrolysis of beta-D-glucose units from the non-reducing ends of (1-&gt;3)-beta-D-glucans, releasing alpha-glucose.</text>
        <dbReference type="EC" id="3.2.1.58"/>
    </reaction>
</comment>
<comment type="subcellular location">
    <subcellularLocation>
        <location evidence="3">Secreted</location>
    </subcellularLocation>
</comment>
<comment type="similarity">
    <text evidence="3">Belongs to the glycosyl hydrolase 5 (cellulase A) family.</text>
</comment>
<protein>
    <recommendedName>
        <fullName>Glucan 1,3-beta-glucosidase 1</fullName>
        <ecNumber>3.2.1.58</ecNumber>
    </recommendedName>
    <alternativeName>
        <fullName>Exo-1,3-beta-glucanase</fullName>
    </alternativeName>
</protein>
<reference key="1">
    <citation type="journal article" date="2002" name="Nature">
        <title>The genome sequence of Schizosaccharomyces pombe.</title>
        <authorList>
            <person name="Wood V."/>
            <person name="Gwilliam R."/>
            <person name="Rajandream M.A."/>
            <person name="Lyne M.H."/>
            <person name="Lyne R."/>
            <person name="Stewart A."/>
            <person name="Sgouros J.G."/>
            <person name="Peat N."/>
            <person name="Hayles J."/>
            <person name="Baker S.G."/>
            <person name="Basham D."/>
            <person name="Bowman S."/>
            <person name="Brooks K."/>
            <person name="Brown D."/>
            <person name="Brown S."/>
            <person name="Chillingworth T."/>
            <person name="Churcher C.M."/>
            <person name="Collins M."/>
            <person name="Connor R."/>
            <person name="Cronin A."/>
            <person name="Davis P."/>
            <person name="Feltwell T."/>
            <person name="Fraser A."/>
            <person name="Gentles S."/>
            <person name="Goble A."/>
            <person name="Hamlin N."/>
            <person name="Harris D.E."/>
            <person name="Hidalgo J."/>
            <person name="Hodgson G."/>
            <person name="Holroyd S."/>
            <person name="Hornsby T."/>
            <person name="Howarth S."/>
            <person name="Huckle E.J."/>
            <person name="Hunt S."/>
            <person name="Jagels K."/>
            <person name="James K.D."/>
            <person name="Jones L."/>
            <person name="Jones M."/>
            <person name="Leather S."/>
            <person name="McDonald S."/>
            <person name="McLean J."/>
            <person name="Mooney P."/>
            <person name="Moule S."/>
            <person name="Mungall K.L."/>
            <person name="Murphy L.D."/>
            <person name="Niblett D."/>
            <person name="Odell C."/>
            <person name="Oliver K."/>
            <person name="O'Neil S."/>
            <person name="Pearson D."/>
            <person name="Quail M.A."/>
            <person name="Rabbinowitsch E."/>
            <person name="Rutherford K.M."/>
            <person name="Rutter S."/>
            <person name="Saunders D."/>
            <person name="Seeger K."/>
            <person name="Sharp S."/>
            <person name="Skelton J."/>
            <person name="Simmonds M.N."/>
            <person name="Squares R."/>
            <person name="Squares S."/>
            <person name="Stevens K."/>
            <person name="Taylor K."/>
            <person name="Taylor R.G."/>
            <person name="Tivey A."/>
            <person name="Walsh S.V."/>
            <person name="Warren T."/>
            <person name="Whitehead S."/>
            <person name="Woodward J.R."/>
            <person name="Volckaert G."/>
            <person name="Aert R."/>
            <person name="Robben J."/>
            <person name="Grymonprez B."/>
            <person name="Weltjens I."/>
            <person name="Vanstreels E."/>
            <person name="Rieger M."/>
            <person name="Schaefer M."/>
            <person name="Mueller-Auer S."/>
            <person name="Gabel C."/>
            <person name="Fuchs M."/>
            <person name="Duesterhoeft A."/>
            <person name="Fritzc C."/>
            <person name="Holzer E."/>
            <person name="Moestl D."/>
            <person name="Hilbert H."/>
            <person name="Borzym K."/>
            <person name="Langer I."/>
            <person name="Beck A."/>
            <person name="Lehrach H."/>
            <person name="Reinhardt R."/>
            <person name="Pohl T.M."/>
            <person name="Eger P."/>
            <person name="Zimmermann W."/>
            <person name="Wedler H."/>
            <person name="Wambutt R."/>
            <person name="Purnelle B."/>
            <person name="Goffeau A."/>
            <person name="Cadieu E."/>
            <person name="Dreano S."/>
            <person name="Gloux S."/>
            <person name="Lelaure V."/>
            <person name="Mottier S."/>
            <person name="Galibert F."/>
            <person name="Aves S.J."/>
            <person name="Xiang Z."/>
            <person name="Hunt C."/>
            <person name="Moore K."/>
            <person name="Hurst S.M."/>
            <person name="Lucas M."/>
            <person name="Rochet M."/>
            <person name="Gaillardin C."/>
            <person name="Tallada V.A."/>
            <person name="Garzon A."/>
            <person name="Thode G."/>
            <person name="Daga R.R."/>
            <person name="Cruzado L."/>
            <person name="Jimenez J."/>
            <person name="Sanchez M."/>
            <person name="del Rey F."/>
            <person name="Benito J."/>
            <person name="Dominguez A."/>
            <person name="Revuelta J.L."/>
            <person name="Moreno S."/>
            <person name="Armstrong J."/>
            <person name="Forsburg S.L."/>
            <person name="Cerutti L."/>
            <person name="Lowe T."/>
            <person name="McCombie W.R."/>
            <person name="Paulsen I."/>
            <person name="Potashkin J."/>
            <person name="Shpakovski G.V."/>
            <person name="Ussery D."/>
            <person name="Barrell B.G."/>
            <person name="Nurse P."/>
        </authorList>
    </citation>
    <scope>NUCLEOTIDE SEQUENCE [LARGE SCALE GENOMIC DNA]</scope>
    <source>
        <strain>972 / ATCC 24843</strain>
    </source>
</reference>
<reference key="2">
    <citation type="journal article" date="1997" name="DNA Res.">
        <title>Identification of open reading frames in Schizosaccharomyces pombe cDNAs.</title>
        <authorList>
            <person name="Yoshioka S."/>
            <person name="Kato K."/>
            <person name="Nakai K."/>
            <person name="Okayama H."/>
            <person name="Nojima H."/>
        </authorList>
    </citation>
    <scope>NUCLEOTIDE SEQUENCE [LARGE SCALE MRNA] OF 76-407</scope>
    <source>
        <strain>PR745</strain>
    </source>
</reference>
<evidence type="ECO:0000250" key="1"/>
<evidence type="ECO:0000255" key="2"/>
<evidence type="ECO:0000305" key="3"/>
<accession>Q9URU6</accession>
<accession>P78778</accession>
<sequence length="407" mass="45506">MLSFTSVFSFFLHALLLKTAFSYVIKRNNPVFDYTSEKVRGVNIGGWLVLENWITPQLFTQFSSMSNPPTDEWGFCEVLGADEAASQLAAHYSSFYTESDFATIASWGVNVLRIPIGYWAFNVVDGEPYVQGQEYWLDQALTWAEQYGLKVWIDLHGVPGSQNGFENSGKTGSIGWQQNDTVTRTLDIITYVANKYTQSQYASVVIGIETVNEPLGYGLDMDQLKQYDLDAYNIVNPLSSSVATIIHDAYVDLSIWDYGVVSPSSYNLVMDVHRYQLYESDECSKTLDDHLSDVCSIGDSIASSPYITVTGEWSGTLADCTIFEEGVDSSTFIGPNSGDISTWTDEYKGAVRLFIETQLDQFERGAGWIYWTAKTGGPSPTWDMGLLIEYGVFPQPFTDRQYSSYCG</sequence>
<dbReference type="EC" id="3.2.1.58"/>
<dbReference type="EMBL" id="CU329671">
    <property type="protein sequence ID" value="CAB50968.1"/>
    <property type="molecule type" value="Genomic_DNA"/>
</dbReference>
<dbReference type="EMBL" id="D89127">
    <property type="protein sequence ID" value="BAA13789.1"/>
    <property type="molecule type" value="mRNA"/>
</dbReference>
<dbReference type="PIR" id="T39282">
    <property type="entry name" value="T39282"/>
</dbReference>
<dbReference type="PIR" id="T42370">
    <property type="entry name" value="T42370"/>
</dbReference>
<dbReference type="RefSeq" id="NP_596461.1">
    <property type="nucleotide sequence ID" value="NM_001022380.2"/>
</dbReference>
<dbReference type="SMR" id="Q9URU6"/>
<dbReference type="BioGRID" id="276537">
    <property type="interactions" value="21"/>
</dbReference>
<dbReference type="FunCoup" id="Q9URU6">
    <property type="interactions" value="41"/>
</dbReference>
<dbReference type="STRING" id="284812.Q9URU6"/>
<dbReference type="CAZy" id="GH5">
    <property type="family name" value="Glycoside Hydrolase Family 5"/>
</dbReference>
<dbReference type="iPTMnet" id="Q9URU6"/>
<dbReference type="PaxDb" id="4896-SPBC1105.05.1"/>
<dbReference type="EnsemblFungi" id="SPBC1105.05.1">
    <property type="protein sequence ID" value="SPBC1105.05.1:pep"/>
    <property type="gene ID" value="SPBC1105.05"/>
</dbReference>
<dbReference type="GeneID" id="2539993"/>
<dbReference type="KEGG" id="spo:2539993"/>
<dbReference type="PomBase" id="SPBC1105.05">
    <property type="gene designation" value="exg1"/>
</dbReference>
<dbReference type="VEuPathDB" id="FungiDB:SPBC1105.05"/>
<dbReference type="eggNOG" id="ENOG502QPYU">
    <property type="taxonomic scope" value="Eukaryota"/>
</dbReference>
<dbReference type="HOGENOM" id="CLU_004624_0_1_1"/>
<dbReference type="InParanoid" id="Q9URU6"/>
<dbReference type="OMA" id="TKQYWKD"/>
<dbReference type="PhylomeDB" id="Q9URU6"/>
<dbReference type="PRO" id="PR:Q9URU6"/>
<dbReference type="Proteomes" id="UP000002485">
    <property type="component" value="Chromosome II"/>
</dbReference>
<dbReference type="GO" id="GO:0000935">
    <property type="term" value="C:division septum"/>
    <property type="evidence" value="ECO:0000314"/>
    <property type="project" value="PomBase"/>
</dbReference>
<dbReference type="GO" id="GO:0005576">
    <property type="term" value="C:extracellular region"/>
    <property type="evidence" value="ECO:0000314"/>
    <property type="project" value="PomBase"/>
</dbReference>
<dbReference type="GO" id="GO:1990819">
    <property type="term" value="C:mating projection actin fusion focus"/>
    <property type="evidence" value="ECO:0000314"/>
    <property type="project" value="PomBase"/>
</dbReference>
<dbReference type="GO" id="GO:0046557">
    <property type="term" value="F:glucan endo-1,6-beta-glucosidase activity"/>
    <property type="evidence" value="ECO:0000314"/>
    <property type="project" value="PomBase"/>
</dbReference>
<dbReference type="GO" id="GO:0004338">
    <property type="term" value="F:glucan exo-1,3-beta-glucosidase activity"/>
    <property type="evidence" value="ECO:0000318"/>
    <property type="project" value="GO_Central"/>
</dbReference>
<dbReference type="GO" id="GO:0070879">
    <property type="term" value="P:fungal-type cell wall beta-glucan metabolic process"/>
    <property type="evidence" value="ECO:0000314"/>
    <property type="project" value="PomBase"/>
</dbReference>
<dbReference type="GO" id="GO:1904541">
    <property type="term" value="P:fungal-type cell wall disassembly involved in conjugation with cellular fusion"/>
    <property type="evidence" value="ECO:0000316"/>
    <property type="project" value="PomBase"/>
</dbReference>
<dbReference type="GO" id="GO:0009251">
    <property type="term" value="P:glucan catabolic process"/>
    <property type="evidence" value="ECO:0000318"/>
    <property type="project" value="GO_Central"/>
</dbReference>
<dbReference type="Gene3D" id="3.20.20.80">
    <property type="entry name" value="Glycosidases"/>
    <property type="match status" value="1"/>
</dbReference>
<dbReference type="InterPro" id="IPR001547">
    <property type="entry name" value="Glyco_hydro_5"/>
</dbReference>
<dbReference type="InterPro" id="IPR018087">
    <property type="entry name" value="Glyco_hydro_5_CS"/>
</dbReference>
<dbReference type="InterPro" id="IPR017853">
    <property type="entry name" value="Glycoside_hydrolase_SF"/>
</dbReference>
<dbReference type="InterPro" id="IPR050386">
    <property type="entry name" value="Glycosyl_hydrolase_5"/>
</dbReference>
<dbReference type="PANTHER" id="PTHR31297:SF1">
    <property type="entry name" value="GLUCAN 1,3-BETA-GLUCOSIDASE I_II-RELATED"/>
    <property type="match status" value="1"/>
</dbReference>
<dbReference type="PANTHER" id="PTHR31297">
    <property type="entry name" value="GLUCAN ENDO-1,6-BETA-GLUCOSIDASE B"/>
    <property type="match status" value="1"/>
</dbReference>
<dbReference type="Pfam" id="PF00150">
    <property type="entry name" value="Cellulase"/>
    <property type="match status" value="1"/>
</dbReference>
<dbReference type="SUPFAM" id="SSF51445">
    <property type="entry name" value="(Trans)glycosidases"/>
    <property type="match status" value="1"/>
</dbReference>
<dbReference type="PROSITE" id="PS00659">
    <property type="entry name" value="GLYCOSYL_HYDROL_F5"/>
    <property type="match status" value="1"/>
</dbReference>
<organism>
    <name type="scientific">Schizosaccharomyces pombe (strain 972 / ATCC 24843)</name>
    <name type="common">Fission yeast</name>
    <dbReference type="NCBI Taxonomy" id="284812"/>
    <lineage>
        <taxon>Eukaryota</taxon>
        <taxon>Fungi</taxon>
        <taxon>Dikarya</taxon>
        <taxon>Ascomycota</taxon>
        <taxon>Taphrinomycotina</taxon>
        <taxon>Schizosaccharomycetes</taxon>
        <taxon>Schizosaccharomycetales</taxon>
        <taxon>Schizosaccharomycetaceae</taxon>
        <taxon>Schizosaccharomyces</taxon>
    </lineage>
</organism>
<keyword id="KW-0961">Cell wall biogenesis/degradation</keyword>
<keyword id="KW-1015">Disulfide bond</keyword>
<keyword id="KW-0326">Glycosidase</keyword>
<keyword id="KW-0378">Hydrolase</keyword>
<keyword id="KW-1185">Reference proteome</keyword>
<keyword id="KW-0964">Secreted</keyword>
<keyword id="KW-0732">Signal</keyword>
<keyword id="KW-0865">Zymogen</keyword>
<gene>
    <name type="primary">exg1</name>
    <name type="ORF">SPBC1105.05</name>
</gene>